<proteinExistence type="inferred from homology"/>
<feature type="chain" id="PRO_0000384644" description="Ribosome maturation factor RimP">
    <location>
        <begin position="1"/>
        <end position="156"/>
    </location>
</feature>
<organism>
    <name type="scientific">Dictyoglomus turgidum (strain DSM 6724 / Z-1310)</name>
    <dbReference type="NCBI Taxonomy" id="515635"/>
    <lineage>
        <taxon>Bacteria</taxon>
        <taxon>Pseudomonadati</taxon>
        <taxon>Dictyoglomota</taxon>
        <taxon>Dictyoglomia</taxon>
        <taxon>Dictyoglomales</taxon>
        <taxon>Dictyoglomaceae</taxon>
        <taxon>Dictyoglomus</taxon>
    </lineage>
</organism>
<dbReference type="EMBL" id="CP001251">
    <property type="protein sequence ID" value="ACK42484.1"/>
    <property type="molecule type" value="Genomic_DNA"/>
</dbReference>
<dbReference type="RefSeq" id="WP_012583566.1">
    <property type="nucleotide sequence ID" value="NC_011661.1"/>
</dbReference>
<dbReference type="RefSeq" id="YP_002353098.1">
    <property type="nucleotide sequence ID" value="NC_011661.1"/>
</dbReference>
<dbReference type="SMR" id="B8E2Y4"/>
<dbReference type="FunCoup" id="B8E2Y4">
    <property type="interactions" value="248"/>
</dbReference>
<dbReference type="STRING" id="515635.Dtur_1205"/>
<dbReference type="EnsemblBacteria" id="ACK42484">
    <property type="protein sequence ID" value="ACK42484"/>
    <property type="gene ID" value="Dtur_1205"/>
</dbReference>
<dbReference type="KEGG" id="dtu:Dtur_1205"/>
<dbReference type="PATRIC" id="fig|515635.4.peg.1243"/>
<dbReference type="eggNOG" id="COG0779">
    <property type="taxonomic scope" value="Bacteria"/>
</dbReference>
<dbReference type="HOGENOM" id="CLU_070525_2_2_0"/>
<dbReference type="InParanoid" id="B8E2Y4"/>
<dbReference type="OrthoDB" id="9805006at2"/>
<dbReference type="Proteomes" id="UP000007719">
    <property type="component" value="Chromosome"/>
</dbReference>
<dbReference type="GO" id="GO:0005829">
    <property type="term" value="C:cytosol"/>
    <property type="evidence" value="ECO:0000318"/>
    <property type="project" value="GO_Central"/>
</dbReference>
<dbReference type="GO" id="GO:0000028">
    <property type="term" value="P:ribosomal small subunit assembly"/>
    <property type="evidence" value="ECO:0000318"/>
    <property type="project" value="GO_Central"/>
</dbReference>
<dbReference type="GO" id="GO:0006412">
    <property type="term" value="P:translation"/>
    <property type="evidence" value="ECO:0000318"/>
    <property type="project" value="GO_Central"/>
</dbReference>
<dbReference type="CDD" id="cd01734">
    <property type="entry name" value="YlxS_C"/>
    <property type="match status" value="1"/>
</dbReference>
<dbReference type="FunFam" id="3.30.300.70:FF:000001">
    <property type="entry name" value="Ribosome maturation factor RimP"/>
    <property type="match status" value="1"/>
</dbReference>
<dbReference type="Gene3D" id="2.30.30.180">
    <property type="entry name" value="Ribosome maturation factor RimP, C-terminal domain"/>
    <property type="match status" value="1"/>
</dbReference>
<dbReference type="Gene3D" id="3.30.300.70">
    <property type="entry name" value="RimP-like superfamily, N-terminal"/>
    <property type="match status" value="1"/>
</dbReference>
<dbReference type="HAMAP" id="MF_01077">
    <property type="entry name" value="RimP"/>
    <property type="match status" value="1"/>
</dbReference>
<dbReference type="InterPro" id="IPR003728">
    <property type="entry name" value="Ribosome_maturation_RimP"/>
</dbReference>
<dbReference type="InterPro" id="IPR028998">
    <property type="entry name" value="RimP_C"/>
</dbReference>
<dbReference type="InterPro" id="IPR036847">
    <property type="entry name" value="RimP_C_sf"/>
</dbReference>
<dbReference type="InterPro" id="IPR028989">
    <property type="entry name" value="RimP_N"/>
</dbReference>
<dbReference type="InterPro" id="IPR035956">
    <property type="entry name" value="RimP_N_sf"/>
</dbReference>
<dbReference type="PANTHER" id="PTHR33867">
    <property type="entry name" value="RIBOSOME MATURATION FACTOR RIMP"/>
    <property type="match status" value="1"/>
</dbReference>
<dbReference type="PANTHER" id="PTHR33867:SF1">
    <property type="entry name" value="RIBOSOME MATURATION FACTOR RIMP"/>
    <property type="match status" value="1"/>
</dbReference>
<dbReference type="Pfam" id="PF17384">
    <property type="entry name" value="DUF150_C"/>
    <property type="match status" value="1"/>
</dbReference>
<dbReference type="Pfam" id="PF02576">
    <property type="entry name" value="RimP_N"/>
    <property type="match status" value="1"/>
</dbReference>
<dbReference type="SUPFAM" id="SSF74942">
    <property type="entry name" value="YhbC-like, C-terminal domain"/>
    <property type="match status" value="1"/>
</dbReference>
<dbReference type="SUPFAM" id="SSF75420">
    <property type="entry name" value="YhbC-like, N-terminal domain"/>
    <property type="match status" value="1"/>
</dbReference>
<evidence type="ECO:0000255" key="1">
    <source>
        <dbReference type="HAMAP-Rule" id="MF_01077"/>
    </source>
</evidence>
<comment type="function">
    <text evidence="1">Required for maturation of 30S ribosomal subunits.</text>
</comment>
<comment type="subcellular location">
    <subcellularLocation>
        <location evidence="1">Cytoplasm</location>
    </subcellularLocation>
</comment>
<comment type="similarity">
    <text evidence="1">Belongs to the RimP family.</text>
</comment>
<sequence length="156" mass="18258">MKDQIYMELLKKLKDIVEPICEKYSYELVDLEYRREPHGWVLRVYIDKVGGVTVEDCAYISEKISKELDIKDPIPHSYILEVSSPGLDRPLKRKRDFERHIGEKVNITLLEEIEGKKKVEGKIFKVDEKNVTLKVDDSLMVIPIEKIKKALLIVEF</sequence>
<name>RIMP_DICTD</name>
<reference key="1">
    <citation type="journal article" date="2016" name="Front. Microbiol.">
        <title>The complete genome sequence of hyperthermophile Dictyoglomus turgidum DSM 6724 reveals a specialized carbohydrate fermentor.</title>
        <authorList>
            <person name="Brumm P.J."/>
            <person name="Gowda K."/>
            <person name="Robb F.T."/>
            <person name="Mead D.A."/>
        </authorList>
    </citation>
    <scope>NUCLEOTIDE SEQUENCE [LARGE SCALE GENOMIC DNA]</scope>
    <source>
        <strain>DSM 6724 / Z-1310</strain>
    </source>
</reference>
<accession>B8E2Y4</accession>
<gene>
    <name evidence="1" type="primary">rimP</name>
    <name type="ordered locus">Dtur_1205</name>
</gene>
<keyword id="KW-0963">Cytoplasm</keyword>
<keyword id="KW-1185">Reference proteome</keyword>
<keyword id="KW-0690">Ribosome biogenesis</keyword>
<protein>
    <recommendedName>
        <fullName evidence="1">Ribosome maturation factor RimP</fullName>
    </recommendedName>
</protein>